<proteinExistence type="inferred from homology"/>
<feature type="chain" id="PRO_0000099514" description="Protein F15">
    <location>
        <begin position="1"/>
        <end position="148"/>
    </location>
</feature>
<organism>
    <name type="scientific">Fowlpox virus (strain NVSL)</name>
    <name type="common">FPV</name>
    <dbReference type="NCBI Taxonomy" id="928301"/>
    <lineage>
        <taxon>Viruses</taxon>
        <taxon>Varidnaviria</taxon>
        <taxon>Bamfordvirae</taxon>
        <taxon>Nucleocytoviricota</taxon>
        <taxon>Pokkesviricetes</taxon>
        <taxon>Chitovirales</taxon>
        <taxon>Poxviridae</taxon>
        <taxon>Chordopoxvirinae</taxon>
        <taxon>Avipoxvirus</taxon>
        <taxon>Fowlpox virus</taxon>
    </lineage>
</organism>
<organismHost>
    <name type="scientific">Vertebrata</name>
    <dbReference type="NCBI Taxonomy" id="7742"/>
</organismHost>
<name>F15_FOWPN</name>
<dbReference type="EMBL" id="AF198100">
    <property type="protein sequence ID" value="AAF44449.1"/>
    <property type="molecule type" value="Genomic_DNA"/>
</dbReference>
<dbReference type="RefSeq" id="NP_039068.1">
    <property type="nucleotide sequence ID" value="NC_002188.1"/>
</dbReference>
<dbReference type="SMR" id="Q9J5B5"/>
<dbReference type="GeneID" id="1486653"/>
<dbReference type="KEGG" id="vg:1486653"/>
<dbReference type="Proteomes" id="UP000008597">
    <property type="component" value="Segment"/>
</dbReference>
<dbReference type="InterPro" id="IPR007675">
    <property type="entry name" value="Poxvirus_F15"/>
</dbReference>
<dbReference type="Pfam" id="PF04596">
    <property type="entry name" value="Pox_F15"/>
    <property type="match status" value="1"/>
</dbReference>
<dbReference type="PIRSF" id="PIRSF015694">
    <property type="entry name" value="VAC_F15L"/>
    <property type="match status" value="1"/>
</dbReference>
<evidence type="ECO:0000305" key="1"/>
<accession>Q9J5B5</accession>
<keyword id="KW-1185">Reference proteome</keyword>
<protein>
    <recommendedName>
        <fullName>Protein F15</fullName>
    </recommendedName>
</protein>
<comment type="similarity">
    <text evidence="1">Belongs to the poxviridae F15 protein family.</text>
</comment>
<reference key="1">
    <citation type="journal article" date="2000" name="J. Virol.">
        <title>The genome of fowlpox virus.</title>
        <authorList>
            <person name="Afonso C.L."/>
            <person name="Tulman E.R."/>
            <person name="Lu Z."/>
            <person name="Zsak L."/>
            <person name="Kutish G.F."/>
            <person name="Rock D.L."/>
        </authorList>
    </citation>
    <scope>NUCLEOTIDE SEQUENCE [LARGE SCALE GENOMIC DNA]</scope>
</reference>
<sequence>MNVSRLEELISMNPFSDMENIVINEKEKCILGNRCFVKLSEVYNMPMCCIDTNQCLTMNRFKFSLNELLYTPFYYKQLQYQYLTPQFIFRCIQEANENNMSCYYCYTKKKEHNGLNIDIFIPTANSKSYIVIGLRIKDFWKQSFKVNK</sequence>
<gene>
    <name type="ordered locus">FPV105</name>
</gene>